<gene>
    <name type="primary">truC</name>
    <name type="synonym">yqcB</name>
    <name type="ordered locus">b2791</name>
    <name type="ordered locus">JW2762</name>
</gene>
<dbReference type="EC" id="5.4.99.26"/>
<dbReference type="EMBL" id="U29581">
    <property type="protein sequence ID" value="AAB40441.1"/>
    <property type="molecule type" value="Genomic_DNA"/>
</dbReference>
<dbReference type="EMBL" id="U00096">
    <property type="protein sequence ID" value="AAC75833.1"/>
    <property type="molecule type" value="Genomic_DNA"/>
</dbReference>
<dbReference type="EMBL" id="AP009048">
    <property type="protein sequence ID" value="BAE76863.1"/>
    <property type="molecule type" value="Genomic_DNA"/>
</dbReference>
<dbReference type="PIR" id="C65061">
    <property type="entry name" value="C65061"/>
</dbReference>
<dbReference type="RefSeq" id="NP_417271.1">
    <property type="nucleotide sequence ID" value="NC_000913.3"/>
</dbReference>
<dbReference type="RefSeq" id="WP_000890001.1">
    <property type="nucleotide sequence ID" value="NZ_SSUR01000022.1"/>
</dbReference>
<dbReference type="SMR" id="P0AA41"/>
<dbReference type="BioGRID" id="4262247">
    <property type="interactions" value="15"/>
</dbReference>
<dbReference type="BioGRID" id="851572">
    <property type="interactions" value="1"/>
</dbReference>
<dbReference type="FunCoup" id="P0AA41">
    <property type="interactions" value="249"/>
</dbReference>
<dbReference type="IntAct" id="P0AA41">
    <property type="interactions" value="1"/>
</dbReference>
<dbReference type="STRING" id="511145.b2791"/>
<dbReference type="jPOST" id="P0AA41"/>
<dbReference type="PaxDb" id="511145-b2791"/>
<dbReference type="EnsemblBacteria" id="AAC75833">
    <property type="protein sequence ID" value="AAC75833"/>
    <property type="gene ID" value="b2791"/>
</dbReference>
<dbReference type="GeneID" id="93779207"/>
<dbReference type="GeneID" id="947242"/>
<dbReference type="KEGG" id="ecj:JW2762"/>
<dbReference type="KEGG" id="eco:b2791"/>
<dbReference type="KEGG" id="ecoc:C3026_15345"/>
<dbReference type="PATRIC" id="fig|1411691.4.peg.3942"/>
<dbReference type="EchoBASE" id="EB2963"/>
<dbReference type="eggNOG" id="COG0564">
    <property type="taxonomic scope" value="Bacteria"/>
</dbReference>
<dbReference type="HOGENOM" id="CLU_016902_11_4_6"/>
<dbReference type="InParanoid" id="P0AA41"/>
<dbReference type="OMA" id="DRHETQF"/>
<dbReference type="OrthoDB" id="9785808at2"/>
<dbReference type="PhylomeDB" id="P0AA41"/>
<dbReference type="BioCyc" id="EcoCyc:G7449-MONOMER"/>
<dbReference type="BioCyc" id="MetaCyc:G7449-MONOMER"/>
<dbReference type="PRO" id="PR:P0AA41"/>
<dbReference type="Proteomes" id="UP000000625">
    <property type="component" value="Chromosome"/>
</dbReference>
<dbReference type="GO" id="GO:0005829">
    <property type="term" value="C:cytosol"/>
    <property type="evidence" value="ECO:0000314"/>
    <property type="project" value="EcoCyc"/>
</dbReference>
<dbReference type="GO" id="GO:0009982">
    <property type="term" value="F:pseudouridine synthase activity"/>
    <property type="evidence" value="ECO:0000315"/>
    <property type="project" value="EcoliWiki"/>
</dbReference>
<dbReference type="GO" id="GO:0003723">
    <property type="term" value="F:RNA binding"/>
    <property type="evidence" value="ECO:0007669"/>
    <property type="project" value="InterPro"/>
</dbReference>
<dbReference type="GO" id="GO:0106029">
    <property type="term" value="F:tRNA pseudouridine synthase activity"/>
    <property type="evidence" value="ECO:0000315"/>
    <property type="project" value="EcoCyc"/>
</dbReference>
<dbReference type="GO" id="GO:0160149">
    <property type="term" value="F:tRNA pseudouridine(65) synthase activity"/>
    <property type="evidence" value="ECO:0007669"/>
    <property type="project" value="UniProtKB-EC"/>
</dbReference>
<dbReference type="GO" id="GO:0000455">
    <property type="term" value="P:enzyme-directed rRNA pseudouridine synthesis"/>
    <property type="evidence" value="ECO:0000318"/>
    <property type="project" value="GO_Central"/>
</dbReference>
<dbReference type="GO" id="GO:0009451">
    <property type="term" value="P:RNA modification"/>
    <property type="evidence" value="ECO:0000315"/>
    <property type="project" value="EcoliWiki"/>
</dbReference>
<dbReference type="GO" id="GO:0006399">
    <property type="term" value="P:tRNA metabolic process"/>
    <property type="evidence" value="ECO:0000315"/>
    <property type="project" value="EcoliWiki"/>
</dbReference>
<dbReference type="GO" id="GO:0008033">
    <property type="term" value="P:tRNA processing"/>
    <property type="evidence" value="ECO:0000315"/>
    <property type="project" value="EcoliWiki"/>
</dbReference>
<dbReference type="GO" id="GO:0031119">
    <property type="term" value="P:tRNA pseudouridine synthesis"/>
    <property type="evidence" value="ECO:0000315"/>
    <property type="project" value="EcoCyc"/>
</dbReference>
<dbReference type="CDD" id="cd02563">
    <property type="entry name" value="PseudoU_synth_TruC"/>
    <property type="match status" value="1"/>
</dbReference>
<dbReference type="FunFam" id="3.30.2350.10:FF:000008">
    <property type="entry name" value="tRNA pseudouridine synthase C"/>
    <property type="match status" value="1"/>
</dbReference>
<dbReference type="Gene3D" id="3.30.2350.10">
    <property type="entry name" value="Pseudouridine synthase"/>
    <property type="match status" value="1"/>
</dbReference>
<dbReference type="InterPro" id="IPR020103">
    <property type="entry name" value="PsdUridine_synth_cat_dom_sf"/>
</dbReference>
<dbReference type="InterPro" id="IPR006224">
    <property type="entry name" value="PsdUridine_synth_RluA-like_CS"/>
</dbReference>
<dbReference type="InterPro" id="IPR006145">
    <property type="entry name" value="PsdUridine_synth_RsuA/RluA"/>
</dbReference>
<dbReference type="InterPro" id="IPR050188">
    <property type="entry name" value="RluA_PseudoU_synthase"/>
</dbReference>
<dbReference type="NCBIfam" id="NF008321">
    <property type="entry name" value="PRK11112.1"/>
    <property type="match status" value="1"/>
</dbReference>
<dbReference type="PANTHER" id="PTHR21600">
    <property type="entry name" value="MITOCHONDRIAL RNA PSEUDOURIDINE SYNTHASE"/>
    <property type="match status" value="1"/>
</dbReference>
<dbReference type="PANTHER" id="PTHR21600:SF56">
    <property type="entry name" value="TRNA PSEUDOURIDINE SYNTHASE C"/>
    <property type="match status" value="1"/>
</dbReference>
<dbReference type="Pfam" id="PF00849">
    <property type="entry name" value="PseudoU_synth_2"/>
    <property type="match status" value="1"/>
</dbReference>
<dbReference type="SUPFAM" id="SSF55120">
    <property type="entry name" value="Pseudouridine synthase"/>
    <property type="match status" value="1"/>
</dbReference>
<dbReference type="PROSITE" id="PS01129">
    <property type="entry name" value="PSI_RLU"/>
    <property type="match status" value="1"/>
</dbReference>
<comment type="function">
    <text evidence="1">Responsible for synthesis of pseudouridine from uracil-65 in transfer RNAs.</text>
</comment>
<comment type="catalytic activity">
    <reaction evidence="1">
        <text>uridine(65) in tRNA = pseudouridine(65) in tRNA</text>
        <dbReference type="Rhea" id="RHEA:42536"/>
        <dbReference type="Rhea" id="RHEA-COMP:10103"/>
        <dbReference type="Rhea" id="RHEA-COMP:10104"/>
        <dbReference type="ChEBI" id="CHEBI:65314"/>
        <dbReference type="ChEBI" id="CHEBI:65315"/>
        <dbReference type="EC" id="5.4.99.26"/>
    </reaction>
</comment>
<comment type="similarity">
    <text evidence="2">Belongs to the pseudouridine synthase RluA family.</text>
</comment>
<feature type="chain" id="PRO_0000162711" description="tRNA pseudouridine synthase C">
    <location>
        <begin position="1"/>
        <end position="260"/>
    </location>
</feature>
<feature type="active site">
    <location>
        <position position="54"/>
    </location>
</feature>
<feature type="mutagenesis site" description="Loss of activity." evidence="1">
    <original>D</original>
    <variation>T</variation>
    <location>
        <position position="54"/>
    </location>
</feature>
<organism>
    <name type="scientific">Escherichia coli (strain K12)</name>
    <dbReference type="NCBI Taxonomy" id="83333"/>
    <lineage>
        <taxon>Bacteria</taxon>
        <taxon>Pseudomonadati</taxon>
        <taxon>Pseudomonadota</taxon>
        <taxon>Gammaproteobacteria</taxon>
        <taxon>Enterobacterales</taxon>
        <taxon>Enterobacteriaceae</taxon>
        <taxon>Escherichia</taxon>
    </lineage>
</organism>
<protein>
    <recommendedName>
        <fullName>tRNA pseudouridine synthase C</fullName>
        <ecNumber>5.4.99.26</ecNumber>
    </recommendedName>
    <alternativeName>
        <fullName>tRNA pseudouridine(65) synthase</fullName>
    </alternativeName>
    <alternativeName>
        <fullName>tRNA pseudouridylate synthase C</fullName>
    </alternativeName>
    <alternativeName>
        <fullName>tRNA-uridine isomerase C</fullName>
    </alternativeName>
</protein>
<keyword id="KW-0413">Isomerase</keyword>
<keyword id="KW-1185">Reference proteome</keyword>
<keyword id="KW-0819">tRNA processing</keyword>
<evidence type="ECO:0000269" key="1">
    <source>
    </source>
</evidence>
<evidence type="ECO:0000305" key="2"/>
<sequence>MLEILYQDEWLVAVNKPSGWLVHRSWLDRDEKVVVMQTVRDQIGQHVFTAHRLDRPTSGVLLMGLSSEAGRLLAQQFEQHQIQKRYHAIVRGWLMEEAVLDYPLVEELDKIADKFAREDKGPQPAVTHYRGLATVEMPVATGRYPTTRYGLVELEPKTGRKHQLRRHLAHLRHPIIGDSKHGDLRQNRSGAEHFGLQRLMLHASQLSLTHPFTGEPLTIHAGLDDTWMQALSQFGWRGLLPENERVEFSAPSGQDGEISS</sequence>
<proteinExistence type="evidence at protein level"/>
<name>TRUC_ECOLI</name>
<accession>P0AA41</accession>
<accession>Q2MA43</accession>
<accession>Q46918</accession>
<reference key="1">
    <citation type="journal article" date="1997" name="Science">
        <title>The complete genome sequence of Escherichia coli K-12.</title>
        <authorList>
            <person name="Blattner F.R."/>
            <person name="Plunkett G. III"/>
            <person name="Bloch C.A."/>
            <person name="Perna N.T."/>
            <person name="Burland V."/>
            <person name="Riley M."/>
            <person name="Collado-Vides J."/>
            <person name="Glasner J.D."/>
            <person name="Rode C.K."/>
            <person name="Mayhew G.F."/>
            <person name="Gregor J."/>
            <person name="Davis N.W."/>
            <person name="Kirkpatrick H.A."/>
            <person name="Goeden M.A."/>
            <person name="Rose D.J."/>
            <person name="Mau B."/>
            <person name="Shao Y."/>
        </authorList>
    </citation>
    <scope>NUCLEOTIDE SEQUENCE [LARGE SCALE GENOMIC DNA]</scope>
    <source>
        <strain>K12 / MG1655 / ATCC 47076</strain>
    </source>
</reference>
<reference key="2">
    <citation type="journal article" date="2006" name="Mol. Syst. Biol.">
        <title>Highly accurate genome sequences of Escherichia coli K-12 strains MG1655 and W3110.</title>
        <authorList>
            <person name="Hayashi K."/>
            <person name="Morooka N."/>
            <person name="Yamamoto Y."/>
            <person name="Fujita K."/>
            <person name="Isono K."/>
            <person name="Choi S."/>
            <person name="Ohtsubo E."/>
            <person name="Baba T."/>
            <person name="Wanner B.L."/>
            <person name="Mori H."/>
            <person name="Horiuchi T."/>
        </authorList>
    </citation>
    <scope>NUCLEOTIDE SEQUENCE [LARGE SCALE GENOMIC DNA]</scope>
    <source>
        <strain>K12 / W3110 / ATCC 27325 / DSM 5911</strain>
    </source>
</reference>
<reference key="3">
    <citation type="journal article" date="2001" name="RNA">
        <title>Identification and site of action of the remaining four putative pseudouridine synthases in Escherichia coli.</title>
        <authorList>
            <person name="Del Campo M."/>
            <person name="Kaya Y."/>
            <person name="Ofengand J."/>
        </authorList>
    </citation>
    <scope>FUNCTION</scope>
    <scope>CATALYTIC ACTIVITY</scope>
    <scope>MUTAGENESIS OF ASP-54</scope>
    <source>
        <strain>K12 / MG1655 / ATCC 47076</strain>
    </source>
</reference>